<gene>
    <name type="primary">PLP3</name>
    <name type="ordered locus">At4g37050</name>
    <name type="ORF">AP22.16</name>
    <name type="ORF">C7A10.310</name>
</gene>
<dbReference type="EC" id="3.1.1.-"/>
<dbReference type="EMBL" id="Z99707">
    <property type="protein sequence ID" value="CAB16789.1"/>
    <property type="molecule type" value="Genomic_DNA"/>
</dbReference>
<dbReference type="EMBL" id="AL161590">
    <property type="protein sequence ID" value="CAB80371.1"/>
    <property type="molecule type" value="Genomic_DNA"/>
</dbReference>
<dbReference type="EMBL" id="CP002687">
    <property type="protein sequence ID" value="AEE86741.1"/>
    <property type="molecule type" value="Genomic_DNA"/>
</dbReference>
<dbReference type="EMBL" id="AY099596">
    <property type="protein sequence ID" value="AAM20447.1"/>
    <property type="molecule type" value="mRNA"/>
</dbReference>
<dbReference type="EMBL" id="AY128840">
    <property type="protein sequence ID" value="AAM91240.1"/>
    <property type="molecule type" value="mRNA"/>
</dbReference>
<dbReference type="PIR" id="F85437">
    <property type="entry name" value="F85437"/>
</dbReference>
<dbReference type="RefSeq" id="NP_195422.3">
    <property type="nucleotide sequence ID" value="NM_119868.3"/>
</dbReference>
<dbReference type="SMR" id="O23181"/>
<dbReference type="FunCoup" id="O23181">
    <property type="interactions" value="174"/>
</dbReference>
<dbReference type="STRING" id="3702.O23181"/>
<dbReference type="PaxDb" id="3702-AT4G37050.1"/>
<dbReference type="ProteomicsDB" id="234921"/>
<dbReference type="EnsemblPlants" id="AT4G37050.1">
    <property type="protein sequence ID" value="AT4G37050.1"/>
    <property type="gene ID" value="AT4G37050"/>
</dbReference>
<dbReference type="GeneID" id="829859"/>
<dbReference type="Gramene" id="AT4G37050.1">
    <property type="protein sequence ID" value="AT4G37050.1"/>
    <property type="gene ID" value="AT4G37050"/>
</dbReference>
<dbReference type="KEGG" id="ath:AT4G37050"/>
<dbReference type="Araport" id="AT4G37050"/>
<dbReference type="TAIR" id="AT4G37050">
    <property type="gene designation" value="PLP4"/>
</dbReference>
<dbReference type="eggNOG" id="KOG0513">
    <property type="taxonomic scope" value="Eukaryota"/>
</dbReference>
<dbReference type="HOGENOM" id="CLU_000288_144_0_1"/>
<dbReference type="InParanoid" id="O23181"/>
<dbReference type="OMA" id="HYFENND"/>
<dbReference type="OrthoDB" id="1658288at2759"/>
<dbReference type="PhylomeDB" id="O23181"/>
<dbReference type="BRENDA" id="3.1.1.23">
    <property type="organism ID" value="399"/>
</dbReference>
<dbReference type="PRO" id="PR:O23181"/>
<dbReference type="Proteomes" id="UP000006548">
    <property type="component" value="Chromosome 4"/>
</dbReference>
<dbReference type="ExpressionAtlas" id="O23181">
    <property type="expression patterns" value="baseline and differential"/>
</dbReference>
<dbReference type="GO" id="GO:0005737">
    <property type="term" value="C:cytoplasm"/>
    <property type="evidence" value="ECO:0007669"/>
    <property type="project" value="UniProtKB-SubCell"/>
</dbReference>
<dbReference type="GO" id="GO:0047372">
    <property type="term" value="F:monoacylglycerol lipase activity"/>
    <property type="evidence" value="ECO:0000314"/>
    <property type="project" value="UniProtKB"/>
</dbReference>
<dbReference type="GO" id="GO:0004620">
    <property type="term" value="F:phospholipase activity"/>
    <property type="evidence" value="ECO:0000314"/>
    <property type="project" value="TAIR"/>
</dbReference>
<dbReference type="GO" id="GO:0006952">
    <property type="term" value="P:defense response"/>
    <property type="evidence" value="ECO:0007669"/>
    <property type="project" value="UniProtKB-KW"/>
</dbReference>
<dbReference type="GO" id="GO:0016042">
    <property type="term" value="P:lipid catabolic process"/>
    <property type="evidence" value="ECO:0007669"/>
    <property type="project" value="UniProtKB-KW"/>
</dbReference>
<dbReference type="GO" id="GO:0009737">
    <property type="term" value="P:response to abscisic acid"/>
    <property type="evidence" value="ECO:0000314"/>
    <property type="project" value="TAIR"/>
</dbReference>
<dbReference type="CDD" id="cd07214">
    <property type="entry name" value="Pat17_isozyme_like"/>
    <property type="match status" value="1"/>
</dbReference>
<dbReference type="FunFam" id="3.40.1090.10:FF:000005">
    <property type="entry name" value="Patatin"/>
    <property type="match status" value="1"/>
</dbReference>
<dbReference type="Gene3D" id="3.40.1090.10">
    <property type="entry name" value="Cytosolic phospholipase A2 catalytic domain"/>
    <property type="match status" value="1"/>
</dbReference>
<dbReference type="InterPro" id="IPR016035">
    <property type="entry name" value="Acyl_Trfase/lysoPLipase"/>
</dbReference>
<dbReference type="InterPro" id="IPR002641">
    <property type="entry name" value="PNPLA_dom"/>
</dbReference>
<dbReference type="PANTHER" id="PTHR32176:SF115">
    <property type="entry name" value="PATATIN-LIKE PROTEIN 3"/>
    <property type="match status" value="1"/>
</dbReference>
<dbReference type="PANTHER" id="PTHR32176">
    <property type="entry name" value="XYLOSE ISOMERASE"/>
    <property type="match status" value="1"/>
</dbReference>
<dbReference type="Pfam" id="PF01734">
    <property type="entry name" value="Patatin"/>
    <property type="match status" value="1"/>
</dbReference>
<dbReference type="SUPFAM" id="SSF52151">
    <property type="entry name" value="FabD/lysophospholipase-like"/>
    <property type="match status" value="1"/>
</dbReference>
<dbReference type="PROSITE" id="PS51635">
    <property type="entry name" value="PNPLA"/>
    <property type="match status" value="1"/>
</dbReference>
<protein>
    <recommendedName>
        <fullName>Patatin-like protein 3</fullName>
        <shortName>AtPLP3</shortName>
        <ecNumber>3.1.1.-</ecNumber>
    </recommendedName>
    <alternativeName>
        <fullName>Patatin-related phospholipase A IIbeta</fullName>
        <shortName>pPLAIIb</shortName>
    </alternativeName>
    <alternativeName>
        <fullName>Phospholipase A IVC</fullName>
        <shortName>AtPLAIVC</shortName>
    </alternativeName>
</protein>
<keyword id="KW-0963">Cytoplasm</keyword>
<keyword id="KW-0378">Hydrolase</keyword>
<keyword id="KW-0442">Lipid degradation</keyword>
<keyword id="KW-0443">Lipid metabolism</keyword>
<keyword id="KW-0597">Phosphoprotein</keyword>
<keyword id="KW-0611">Plant defense</keyword>
<keyword id="KW-1185">Reference proteome</keyword>
<name>PLP3_ARATH</name>
<comment type="function">
    <text evidence="5">Possesses non-specific lipolytic acyl hydrolase (LAH) activity. Catalyzes the hydrolysis of the neutral lipids monogalactosyldiacylglycerol (MGDG), digalactosyldiacylglycerol (DGDG) and phosphatidylglycerol (PG), and less efficiently the polar lipids phosphatidylcholine (PC) and phosphatidylinositol (PI), but not the storage lipid triacylglycerol (TAG). May play a role in root development.</text>
</comment>
<comment type="subcellular location">
    <subcellularLocation>
        <location evidence="4">Cytoplasm</location>
    </subcellularLocation>
</comment>
<comment type="tissue specificity">
    <text evidence="4 5">Expressed specifically in the stigma, ovary and funiculus of the ovary.</text>
</comment>
<comment type="induction">
    <text evidence="5">By abscisic acid (ABA) or phosphate deficiency in roots.</text>
</comment>
<comment type="domain">
    <text evidence="1">The nitrogen atoms of the two glycine residues in the GGXR motif define the oxyanion hole, and stabilize the oxyanion that forms during the nucleophilic attack by the catalytic serine during substrate cleavage.</text>
</comment>
<comment type="disruption phenotype">
    <text evidence="5">No visible phenotype under normal growth conditions, but mutant plants exhibit an impaired response to phosphate deficiency during root development.</text>
</comment>
<comment type="similarity">
    <text evidence="6">Belongs to the patatin family.</text>
</comment>
<evidence type="ECO:0000250" key="1"/>
<evidence type="ECO:0000250" key="2">
    <source>
        <dbReference type="UniProtKB" id="O23179"/>
    </source>
</evidence>
<evidence type="ECO:0000255" key="3">
    <source>
        <dbReference type="PROSITE-ProRule" id="PRU01161"/>
    </source>
</evidence>
<evidence type="ECO:0000269" key="4">
    <source>
    </source>
</evidence>
<evidence type="ECO:0000269" key="5">
    <source>
    </source>
</evidence>
<evidence type="ECO:0000305" key="6"/>
<feature type="chain" id="PRO_0000425815" description="Patatin-like protein 3">
    <location>
        <begin position="1"/>
        <end position="428"/>
    </location>
</feature>
<feature type="domain" description="PNPLA" evidence="3">
    <location>
        <begin position="38"/>
        <end position="252"/>
    </location>
</feature>
<feature type="short sequence motif" description="GXGXXG" evidence="3">
    <location>
        <begin position="42"/>
        <end position="47"/>
    </location>
</feature>
<feature type="short sequence motif" description="GXSXG" evidence="3">
    <location>
        <begin position="80"/>
        <end position="84"/>
    </location>
</feature>
<feature type="short sequence motif" description="DGA/G" evidence="3">
    <location>
        <begin position="239"/>
        <end position="241"/>
    </location>
</feature>
<feature type="active site" description="Nucleophile" evidence="3">
    <location>
        <position position="82"/>
    </location>
</feature>
<feature type="active site" description="Proton acceptor" evidence="3">
    <location>
        <position position="239"/>
    </location>
</feature>
<feature type="modified residue" description="Phosphoserine" evidence="2">
    <location>
        <position position="423"/>
    </location>
</feature>
<sequence length="428" mass="47204">MDTERGSISSSEISRTAHLQDRTVACLPPSYGQLVTILSIDGGGIRGIIPGTILAYLESQLQELDGEEARLVDYFDVISGTSTGGLIVAMLTAQDQSGGHSRNSNRPLFEAKEIVPFYLKHSPKIFPQPRGIFCGWGETIVRLVGGPKFNGKYLHDLVEGFLGDTKLTQSLTNVVIPCFDIKKLQPVIFSSYQAVNNQAMNAKLSDICISTSAAPTFFPAHRFTNEDSEGIKHEFNLIDGGIAANNPTLCAIAEVTKQIIKKNPVMGDISPLDFTRFLVISIGTGSIRNQEKYNAKMASKWGLMCWVFESGSTPILDCYSEAIHDMVDYQSSVVFQALRSEKNYLRIDDDSLKGDLGSVDISTEKNMEGLVEVGEALLKKRVSRVNLESGHYQPISENVTNEEALKRFAKVLSEERKLRESRSPKLKI</sequence>
<organism>
    <name type="scientific">Arabidopsis thaliana</name>
    <name type="common">Mouse-ear cress</name>
    <dbReference type="NCBI Taxonomy" id="3702"/>
    <lineage>
        <taxon>Eukaryota</taxon>
        <taxon>Viridiplantae</taxon>
        <taxon>Streptophyta</taxon>
        <taxon>Embryophyta</taxon>
        <taxon>Tracheophyta</taxon>
        <taxon>Spermatophyta</taxon>
        <taxon>Magnoliopsida</taxon>
        <taxon>eudicotyledons</taxon>
        <taxon>Gunneridae</taxon>
        <taxon>Pentapetalae</taxon>
        <taxon>rosids</taxon>
        <taxon>malvids</taxon>
        <taxon>Brassicales</taxon>
        <taxon>Brassicaceae</taxon>
        <taxon>Camelineae</taxon>
        <taxon>Arabidopsis</taxon>
    </lineage>
</organism>
<accession>O23181</accession>
<accession>Q8L3P2</accession>
<reference key="1">
    <citation type="journal article" date="1998" name="Nature">
        <title>Analysis of 1.9 Mb of contiguous sequence from chromosome 4 of Arabidopsis thaliana.</title>
        <authorList>
            <person name="Bevan M."/>
            <person name="Bancroft I."/>
            <person name="Bent E."/>
            <person name="Love K."/>
            <person name="Goodman H.M."/>
            <person name="Dean C."/>
            <person name="Bergkamp R."/>
            <person name="Dirkse W."/>
            <person name="van Staveren M."/>
            <person name="Stiekema W."/>
            <person name="Drost L."/>
            <person name="Ridley P."/>
            <person name="Hudson S.-A."/>
            <person name="Patel K."/>
            <person name="Murphy G."/>
            <person name="Piffanelli P."/>
            <person name="Wedler H."/>
            <person name="Wedler E."/>
            <person name="Wambutt R."/>
            <person name="Weitzenegger T."/>
            <person name="Pohl T."/>
            <person name="Terryn N."/>
            <person name="Gielen J."/>
            <person name="Villarroel R."/>
            <person name="De Clercq R."/>
            <person name="van Montagu M."/>
            <person name="Lecharny A."/>
            <person name="Aubourg S."/>
            <person name="Gy I."/>
            <person name="Kreis M."/>
            <person name="Lao N."/>
            <person name="Kavanagh T."/>
            <person name="Hempel S."/>
            <person name="Kotter P."/>
            <person name="Entian K.-D."/>
            <person name="Rieger M."/>
            <person name="Schaefer M."/>
            <person name="Funk B."/>
            <person name="Mueller-Auer S."/>
            <person name="Silvey M."/>
            <person name="James R."/>
            <person name="Monfort A."/>
            <person name="Pons A."/>
            <person name="Puigdomenech P."/>
            <person name="Douka A."/>
            <person name="Voukelatou E."/>
            <person name="Milioni D."/>
            <person name="Hatzopoulos P."/>
            <person name="Piravandi E."/>
            <person name="Obermaier B."/>
            <person name="Hilbert H."/>
            <person name="Duesterhoeft A."/>
            <person name="Moores T."/>
            <person name="Jones J.D.G."/>
            <person name="Eneva T."/>
            <person name="Palme K."/>
            <person name="Benes V."/>
            <person name="Rechmann S."/>
            <person name="Ansorge W."/>
            <person name="Cooke R."/>
            <person name="Berger C."/>
            <person name="Delseny M."/>
            <person name="Voet M."/>
            <person name="Volckaert G."/>
            <person name="Mewes H.-W."/>
            <person name="Klosterman S."/>
            <person name="Schueller C."/>
            <person name="Chalwatzis N."/>
        </authorList>
    </citation>
    <scope>NUCLEOTIDE SEQUENCE [LARGE SCALE GENOMIC DNA]</scope>
    <source>
        <strain>cv. Columbia</strain>
    </source>
</reference>
<reference key="2">
    <citation type="journal article" date="1999" name="Nature">
        <title>Sequence and analysis of chromosome 4 of the plant Arabidopsis thaliana.</title>
        <authorList>
            <person name="Mayer K.F.X."/>
            <person name="Schueller C."/>
            <person name="Wambutt R."/>
            <person name="Murphy G."/>
            <person name="Volckaert G."/>
            <person name="Pohl T."/>
            <person name="Duesterhoeft A."/>
            <person name="Stiekema W."/>
            <person name="Entian K.-D."/>
            <person name="Terryn N."/>
            <person name="Harris B."/>
            <person name="Ansorge W."/>
            <person name="Brandt P."/>
            <person name="Grivell L.A."/>
            <person name="Rieger M."/>
            <person name="Weichselgartner M."/>
            <person name="de Simone V."/>
            <person name="Obermaier B."/>
            <person name="Mache R."/>
            <person name="Mueller M."/>
            <person name="Kreis M."/>
            <person name="Delseny M."/>
            <person name="Puigdomenech P."/>
            <person name="Watson M."/>
            <person name="Schmidtheini T."/>
            <person name="Reichert B."/>
            <person name="Portetelle D."/>
            <person name="Perez-Alonso M."/>
            <person name="Boutry M."/>
            <person name="Bancroft I."/>
            <person name="Vos P."/>
            <person name="Hoheisel J."/>
            <person name="Zimmermann W."/>
            <person name="Wedler H."/>
            <person name="Ridley P."/>
            <person name="Langham S.-A."/>
            <person name="McCullagh B."/>
            <person name="Bilham L."/>
            <person name="Robben J."/>
            <person name="van der Schueren J."/>
            <person name="Grymonprez B."/>
            <person name="Chuang Y.-J."/>
            <person name="Vandenbussche F."/>
            <person name="Braeken M."/>
            <person name="Weltjens I."/>
            <person name="Voet M."/>
            <person name="Bastiaens I."/>
            <person name="Aert R."/>
            <person name="Defoor E."/>
            <person name="Weitzenegger T."/>
            <person name="Bothe G."/>
            <person name="Ramsperger U."/>
            <person name="Hilbert H."/>
            <person name="Braun M."/>
            <person name="Holzer E."/>
            <person name="Brandt A."/>
            <person name="Peters S."/>
            <person name="van Staveren M."/>
            <person name="Dirkse W."/>
            <person name="Mooijman P."/>
            <person name="Klein Lankhorst R."/>
            <person name="Rose M."/>
            <person name="Hauf J."/>
            <person name="Koetter P."/>
            <person name="Berneiser S."/>
            <person name="Hempel S."/>
            <person name="Feldpausch M."/>
            <person name="Lamberth S."/>
            <person name="Van den Daele H."/>
            <person name="De Keyser A."/>
            <person name="Buysshaert C."/>
            <person name="Gielen J."/>
            <person name="Villarroel R."/>
            <person name="De Clercq R."/>
            <person name="van Montagu M."/>
            <person name="Rogers J."/>
            <person name="Cronin A."/>
            <person name="Quail M.A."/>
            <person name="Bray-Allen S."/>
            <person name="Clark L."/>
            <person name="Doggett J."/>
            <person name="Hall S."/>
            <person name="Kay M."/>
            <person name="Lennard N."/>
            <person name="McLay K."/>
            <person name="Mayes R."/>
            <person name="Pettett A."/>
            <person name="Rajandream M.A."/>
            <person name="Lyne M."/>
            <person name="Benes V."/>
            <person name="Rechmann S."/>
            <person name="Borkova D."/>
            <person name="Bloecker H."/>
            <person name="Scharfe M."/>
            <person name="Grimm M."/>
            <person name="Loehnert T.-H."/>
            <person name="Dose S."/>
            <person name="de Haan M."/>
            <person name="Maarse A.C."/>
            <person name="Schaefer M."/>
            <person name="Mueller-Auer S."/>
            <person name="Gabel C."/>
            <person name="Fuchs M."/>
            <person name="Fartmann B."/>
            <person name="Granderath K."/>
            <person name="Dauner D."/>
            <person name="Herzl A."/>
            <person name="Neumann S."/>
            <person name="Argiriou A."/>
            <person name="Vitale D."/>
            <person name="Liguori R."/>
            <person name="Piravandi E."/>
            <person name="Massenet O."/>
            <person name="Quigley F."/>
            <person name="Clabauld G."/>
            <person name="Muendlein A."/>
            <person name="Felber R."/>
            <person name="Schnabl S."/>
            <person name="Hiller R."/>
            <person name="Schmidt W."/>
            <person name="Lecharny A."/>
            <person name="Aubourg S."/>
            <person name="Chefdor F."/>
            <person name="Cooke R."/>
            <person name="Berger C."/>
            <person name="Monfort A."/>
            <person name="Casacuberta E."/>
            <person name="Gibbons T."/>
            <person name="Weber N."/>
            <person name="Vandenbol M."/>
            <person name="Bargues M."/>
            <person name="Terol J."/>
            <person name="Torres A."/>
            <person name="Perez-Perez A."/>
            <person name="Purnelle B."/>
            <person name="Bent E."/>
            <person name="Johnson S."/>
            <person name="Tacon D."/>
            <person name="Jesse T."/>
            <person name="Heijnen L."/>
            <person name="Schwarz S."/>
            <person name="Scholler P."/>
            <person name="Heber S."/>
            <person name="Francs P."/>
            <person name="Bielke C."/>
            <person name="Frishman D."/>
            <person name="Haase D."/>
            <person name="Lemcke K."/>
            <person name="Mewes H.-W."/>
            <person name="Stocker S."/>
            <person name="Zaccaria P."/>
            <person name="Bevan M."/>
            <person name="Wilson R.K."/>
            <person name="de la Bastide M."/>
            <person name="Habermann K."/>
            <person name="Parnell L."/>
            <person name="Dedhia N."/>
            <person name="Gnoj L."/>
            <person name="Schutz K."/>
            <person name="Huang E."/>
            <person name="Spiegel L."/>
            <person name="Sekhon M."/>
            <person name="Murray J."/>
            <person name="Sheet P."/>
            <person name="Cordes M."/>
            <person name="Abu-Threideh J."/>
            <person name="Stoneking T."/>
            <person name="Kalicki J."/>
            <person name="Graves T."/>
            <person name="Harmon G."/>
            <person name="Edwards J."/>
            <person name="Latreille P."/>
            <person name="Courtney L."/>
            <person name="Cloud J."/>
            <person name="Abbott A."/>
            <person name="Scott K."/>
            <person name="Johnson D."/>
            <person name="Minx P."/>
            <person name="Bentley D."/>
            <person name="Fulton B."/>
            <person name="Miller N."/>
            <person name="Greco T."/>
            <person name="Kemp K."/>
            <person name="Kramer J."/>
            <person name="Fulton L."/>
            <person name="Mardis E."/>
            <person name="Dante M."/>
            <person name="Pepin K."/>
            <person name="Hillier L.W."/>
            <person name="Nelson J."/>
            <person name="Spieth J."/>
            <person name="Ryan E."/>
            <person name="Andrews S."/>
            <person name="Geisel C."/>
            <person name="Layman D."/>
            <person name="Du H."/>
            <person name="Ali J."/>
            <person name="Berghoff A."/>
            <person name="Jones K."/>
            <person name="Drone K."/>
            <person name="Cotton M."/>
            <person name="Joshu C."/>
            <person name="Antonoiu B."/>
            <person name="Zidanic M."/>
            <person name="Strong C."/>
            <person name="Sun H."/>
            <person name="Lamar B."/>
            <person name="Yordan C."/>
            <person name="Ma P."/>
            <person name="Zhong J."/>
            <person name="Preston R."/>
            <person name="Vil D."/>
            <person name="Shekher M."/>
            <person name="Matero A."/>
            <person name="Shah R."/>
            <person name="Swaby I.K."/>
            <person name="O'Shaughnessy A."/>
            <person name="Rodriguez M."/>
            <person name="Hoffman J."/>
            <person name="Till S."/>
            <person name="Granat S."/>
            <person name="Shohdy N."/>
            <person name="Hasegawa A."/>
            <person name="Hameed A."/>
            <person name="Lodhi M."/>
            <person name="Johnson A."/>
            <person name="Chen E."/>
            <person name="Marra M.A."/>
            <person name="Martienssen R."/>
            <person name="McCombie W.R."/>
        </authorList>
    </citation>
    <scope>NUCLEOTIDE SEQUENCE [LARGE SCALE GENOMIC DNA]</scope>
    <source>
        <strain>cv. Columbia</strain>
    </source>
</reference>
<reference key="3">
    <citation type="journal article" date="2017" name="Plant J.">
        <title>Araport11: a complete reannotation of the Arabidopsis thaliana reference genome.</title>
        <authorList>
            <person name="Cheng C.Y."/>
            <person name="Krishnakumar V."/>
            <person name="Chan A.P."/>
            <person name="Thibaud-Nissen F."/>
            <person name="Schobel S."/>
            <person name="Town C.D."/>
        </authorList>
    </citation>
    <scope>GENOME REANNOTATION</scope>
    <source>
        <strain>cv. Columbia</strain>
    </source>
</reference>
<reference key="4">
    <citation type="journal article" date="2003" name="Science">
        <title>Empirical analysis of transcriptional activity in the Arabidopsis genome.</title>
        <authorList>
            <person name="Yamada K."/>
            <person name="Lim J."/>
            <person name="Dale J.M."/>
            <person name="Chen H."/>
            <person name="Shinn P."/>
            <person name="Palm C.J."/>
            <person name="Southwick A.M."/>
            <person name="Wu H.C."/>
            <person name="Kim C.J."/>
            <person name="Nguyen M."/>
            <person name="Pham P.K."/>
            <person name="Cheuk R.F."/>
            <person name="Karlin-Newmann G."/>
            <person name="Liu S.X."/>
            <person name="Lam B."/>
            <person name="Sakano H."/>
            <person name="Wu T."/>
            <person name="Yu G."/>
            <person name="Miranda M."/>
            <person name="Quach H.L."/>
            <person name="Tripp M."/>
            <person name="Chang C.H."/>
            <person name="Lee J.M."/>
            <person name="Toriumi M.J."/>
            <person name="Chan M.M."/>
            <person name="Tang C.C."/>
            <person name="Onodera C.S."/>
            <person name="Deng J.M."/>
            <person name="Akiyama K."/>
            <person name="Ansari Y."/>
            <person name="Arakawa T."/>
            <person name="Banh J."/>
            <person name="Banno F."/>
            <person name="Bowser L."/>
            <person name="Brooks S.Y."/>
            <person name="Carninci P."/>
            <person name="Chao Q."/>
            <person name="Choy N."/>
            <person name="Enju A."/>
            <person name="Goldsmith A.D."/>
            <person name="Gurjal M."/>
            <person name="Hansen N.F."/>
            <person name="Hayashizaki Y."/>
            <person name="Johnson-Hopson C."/>
            <person name="Hsuan V.W."/>
            <person name="Iida K."/>
            <person name="Karnes M."/>
            <person name="Khan S."/>
            <person name="Koesema E."/>
            <person name="Ishida J."/>
            <person name="Jiang P.X."/>
            <person name="Jones T."/>
            <person name="Kawai J."/>
            <person name="Kamiya A."/>
            <person name="Meyers C."/>
            <person name="Nakajima M."/>
            <person name="Narusaka M."/>
            <person name="Seki M."/>
            <person name="Sakurai T."/>
            <person name="Satou M."/>
            <person name="Tamse R."/>
            <person name="Vaysberg M."/>
            <person name="Wallender E.K."/>
            <person name="Wong C."/>
            <person name="Yamamura Y."/>
            <person name="Yuan S."/>
            <person name="Shinozaki K."/>
            <person name="Davis R.W."/>
            <person name="Theologis A."/>
            <person name="Ecker J.R."/>
        </authorList>
    </citation>
    <scope>NUCLEOTIDE SEQUENCE [LARGE SCALE MRNA] OF 9-428 AND 90-428</scope>
    <source>
        <strain>cv. Columbia</strain>
    </source>
</reference>
<reference key="5">
    <citation type="journal article" date="2002" name="Plant Physiol.">
        <title>Molecular identification of cytosolic, patatin-related phospholipases A from Arabidopsis with potential functions in plant signal transduction.</title>
        <authorList>
            <person name="Holk A."/>
            <person name="Rietz S."/>
            <person name="Zahn M."/>
            <person name="Quader H."/>
            <person name="Scherer G.F."/>
        </authorList>
    </citation>
    <scope>SUBCELLULAR LOCATION</scope>
    <scope>TISSUE SPECIFICITY</scope>
</reference>
<reference key="6">
    <citation type="journal article" date="2010" name="Mol. Plant">
        <title>Roles of Arabidopsis patatin-related phospholipases A in root development are related to auxin responses and phosphate deficiency.</title>
        <authorList>
            <person name="Rietz S."/>
            <person name="Dermendjiev G."/>
            <person name="Oppermann E."/>
            <person name="Tafesse F.G."/>
            <person name="Effendi Y."/>
            <person name="Holk A."/>
            <person name="Parker J.E."/>
            <person name="Teige M."/>
            <person name="Scherer G.F."/>
        </authorList>
    </citation>
    <scope>FUNCTION</scope>
    <scope>TISSUE SPECIFICITY</scope>
    <scope>INDUCTION</scope>
    <scope>DISRUPTION PHENOTYPE</scope>
</reference>
<proteinExistence type="evidence at transcript level"/>